<name>ICMF_NOCFA</name>
<accession>Q5Z110</accession>
<comment type="function">
    <text evidence="1 4">Catalyzes the reversible interconversion of isobutyryl-CoA and n-butyryl-CoA, using radical chemistry (PubMed:19864421). Also exhibits GTPase activity, associated with its G-protein domain (MeaI) that functions as a chaperone that assists cofactor delivery and proper holo-enzyme assembly (By similarity). Does not exhibit methylmalonyl-CoA mutase (MCM) activity (PubMed:19864421).</text>
</comment>
<comment type="catalytic activity">
    <reaction evidence="3 4">
        <text>2-methylpropanoyl-CoA = butanoyl-CoA</text>
        <dbReference type="Rhea" id="RHEA:13141"/>
        <dbReference type="ChEBI" id="CHEBI:57338"/>
        <dbReference type="ChEBI" id="CHEBI:57371"/>
        <dbReference type="EC" id="5.4.99.13"/>
    </reaction>
</comment>
<comment type="catalytic activity">
    <reaction evidence="3">
        <text>GTP + H2O = GDP + phosphate + H(+)</text>
        <dbReference type="Rhea" id="RHEA:19669"/>
        <dbReference type="ChEBI" id="CHEBI:15377"/>
        <dbReference type="ChEBI" id="CHEBI:15378"/>
        <dbReference type="ChEBI" id="CHEBI:37565"/>
        <dbReference type="ChEBI" id="CHEBI:43474"/>
        <dbReference type="ChEBI" id="CHEBI:58189"/>
    </reaction>
</comment>
<comment type="cofactor">
    <cofactor evidence="3">
        <name>adenosylcob(III)alamin</name>
        <dbReference type="ChEBI" id="CHEBI:18408"/>
    </cofactor>
</comment>
<comment type="cofactor">
    <cofactor evidence="3">
        <name>Mg(2+)</name>
        <dbReference type="ChEBI" id="CHEBI:18420"/>
    </cofactor>
</comment>
<comment type="subunit">
    <text evidence="3">Homodimer.</text>
</comment>
<comment type="domain">
    <text evidence="3 4">Is composed of four functional domains: the N-terminal 5'-deoxyadenosylcobalamin binding region that is homologous to the small subunit of ICM (IcmB), a middle P-loop GTPase domain (MeaI) that likely acts as a chaperone for ICM, a structured linker region involved in dimer formation, and a C-terminal part that is homologous to the large substrate-binding subunit of ICM (IcmA).</text>
</comment>
<comment type="similarity">
    <text evidence="3 6">Belongs to the IcmF family.</text>
</comment>
<gene>
    <name evidence="3 5" type="primary">icmF</name>
    <name evidence="7" type="ordered locus">NFA_10360</name>
</gene>
<organism>
    <name type="scientific">Nocardia farcinica (strain IFM 10152)</name>
    <dbReference type="NCBI Taxonomy" id="247156"/>
    <lineage>
        <taxon>Bacteria</taxon>
        <taxon>Bacillati</taxon>
        <taxon>Actinomycetota</taxon>
        <taxon>Actinomycetes</taxon>
        <taxon>Mycobacteriales</taxon>
        <taxon>Nocardiaceae</taxon>
        <taxon>Nocardia</taxon>
    </lineage>
</organism>
<proteinExistence type="evidence at protein level"/>
<dbReference type="EC" id="5.4.99.13" evidence="3 4"/>
<dbReference type="EC" id="3.6.5.-" evidence="2 3"/>
<dbReference type="EMBL" id="AP006618">
    <property type="protein sequence ID" value="BAD55881.1"/>
    <property type="molecule type" value="Genomic_DNA"/>
</dbReference>
<dbReference type="RefSeq" id="WP_011207566.1">
    <property type="nucleotide sequence ID" value="NC_006361.1"/>
</dbReference>
<dbReference type="SMR" id="Q5Z110"/>
<dbReference type="STRING" id="247156.NFA_10360"/>
<dbReference type="GeneID" id="61131858"/>
<dbReference type="KEGG" id="nfa:NFA_10360"/>
<dbReference type="eggNOG" id="COG1703">
    <property type="taxonomic scope" value="Bacteria"/>
</dbReference>
<dbReference type="eggNOG" id="COG1884">
    <property type="taxonomic scope" value="Bacteria"/>
</dbReference>
<dbReference type="eggNOG" id="COG2185">
    <property type="taxonomic scope" value="Bacteria"/>
</dbReference>
<dbReference type="HOGENOM" id="CLU_009523_2_0_11"/>
<dbReference type="OrthoDB" id="9762378at2"/>
<dbReference type="Proteomes" id="UP000006820">
    <property type="component" value="Chromosome"/>
</dbReference>
<dbReference type="GO" id="GO:0031419">
    <property type="term" value="F:cobalamin binding"/>
    <property type="evidence" value="ECO:0007669"/>
    <property type="project" value="UniProtKB-UniRule"/>
</dbReference>
<dbReference type="GO" id="GO:0005525">
    <property type="term" value="F:GTP binding"/>
    <property type="evidence" value="ECO:0007669"/>
    <property type="project" value="UniProtKB-UniRule"/>
</dbReference>
<dbReference type="GO" id="GO:0003924">
    <property type="term" value="F:GTPase activity"/>
    <property type="evidence" value="ECO:0007669"/>
    <property type="project" value="UniProtKB-UniRule"/>
</dbReference>
<dbReference type="GO" id="GO:0047727">
    <property type="term" value="F:isobutyryl-CoA mutase activity"/>
    <property type="evidence" value="ECO:0000314"/>
    <property type="project" value="UniProtKB"/>
</dbReference>
<dbReference type="GO" id="GO:0000287">
    <property type="term" value="F:magnesium ion binding"/>
    <property type="evidence" value="ECO:0007669"/>
    <property type="project" value="UniProtKB-UniRule"/>
</dbReference>
<dbReference type="GO" id="GO:0004494">
    <property type="term" value="F:methylmalonyl-CoA mutase activity"/>
    <property type="evidence" value="ECO:0007669"/>
    <property type="project" value="InterPro"/>
</dbReference>
<dbReference type="GO" id="GO:0034784">
    <property type="term" value="F:pivalyl-CoA mutase activity"/>
    <property type="evidence" value="ECO:0007669"/>
    <property type="project" value="InterPro"/>
</dbReference>
<dbReference type="GO" id="GO:0006637">
    <property type="term" value="P:acyl-CoA metabolic process"/>
    <property type="evidence" value="ECO:0000314"/>
    <property type="project" value="UniProtKB"/>
</dbReference>
<dbReference type="CDD" id="cd03114">
    <property type="entry name" value="MMAA-like"/>
    <property type="match status" value="1"/>
</dbReference>
<dbReference type="FunFam" id="3.20.20.240:FF:000003">
    <property type="entry name" value="Fused isobutyryl-CoA mutase"/>
    <property type="match status" value="1"/>
</dbReference>
<dbReference type="Gene3D" id="3.40.50.280">
    <property type="entry name" value="Cobalamin-binding domain"/>
    <property type="match status" value="1"/>
</dbReference>
<dbReference type="Gene3D" id="3.20.20.240">
    <property type="entry name" value="Methylmalonyl-CoA mutase"/>
    <property type="match status" value="1"/>
</dbReference>
<dbReference type="Gene3D" id="3.40.50.300">
    <property type="entry name" value="P-loop containing nucleotide triphosphate hydrolases"/>
    <property type="match status" value="1"/>
</dbReference>
<dbReference type="HAMAP" id="MF_02050">
    <property type="entry name" value="IcmF"/>
    <property type="match status" value="1"/>
</dbReference>
<dbReference type="InterPro" id="IPR016176">
    <property type="entry name" value="Cbl-dep_enz_cat"/>
</dbReference>
<dbReference type="InterPro" id="IPR006158">
    <property type="entry name" value="Cobalamin-bd"/>
</dbReference>
<dbReference type="InterPro" id="IPR036724">
    <property type="entry name" value="Cobalamin-bd_sf"/>
</dbReference>
<dbReference type="InterPro" id="IPR052040">
    <property type="entry name" value="GTPase/Isobutyryl-CoA_mutase"/>
</dbReference>
<dbReference type="InterPro" id="IPR033669">
    <property type="entry name" value="IcmF"/>
</dbReference>
<dbReference type="InterPro" id="IPR053439">
    <property type="entry name" value="IcmF/GTPase_domain"/>
</dbReference>
<dbReference type="InterPro" id="IPR006099">
    <property type="entry name" value="MeMalonylCoA_mutase_a/b_cat"/>
</dbReference>
<dbReference type="InterPro" id="IPR006098">
    <property type="entry name" value="MMCoA_mutase_a_cat"/>
</dbReference>
<dbReference type="InterPro" id="IPR027417">
    <property type="entry name" value="P-loop_NTPase"/>
</dbReference>
<dbReference type="NCBIfam" id="TIGR00641">
    <property type="entry name" value="acid_CoA_mut_N"/>
    <property type="match status" value="1"/>
</dbReference>
<dbReference type="NCBIfam" id="NF045497">
    <property type="entry name" value="IsobCoAmut_IcmF"/>
    <property type="match status" value="1"/>
</dbReference>
<dbReference type="PANTHER" id="PTHR43087:SF1">
    <property type="entry name" value="LAO_AO TRANSPORT SYSTEM ATPASE"/>
    <property type="match status" value="1"/>
</dbReference>
<dbReference type="PANTHER" id="PTHR43087">
    <property type="entry name" value="LYSINE/ARGININE/ORNITHINE TRANSPORT SYSTEM KINASE"/>
    <property type="match status" value="1"/>
</dbReference>
<dbReference type="Pfam" id="PF02310">
    <property type="entry name" value="B12-binding"/>
    <property type="match status" value="1"/>
</dbReference>
<dbReference type="Pfam" id="PF03308">
    <property type="entry name" value="MeaB"/>
    <property type="match status" value="1"/>
</dbReference>
<dbReference type="Pfam" id="PF01642">
    <property type="entry name" value="MM_CoA_mutase"/>
    <property type="match status" value="1"/>
</dbReference>
<dbReference type="SUPFAM" id="SSF52242">
    <property type="entry name" value="Cobalamin (vitamin B12)-binding domain"/>
    <property type="match status" value="1"/>
</dbReference>
<dbReference type="SUPFAM" id="SSF51703">
    <property type="entry name" value="Cobalamin (vitamin B12)-dependent enzymes"/>
    <property type="match status" value="1"/>
</dbReference>
<dbReference type="SUPFAM" id="SSF52540">
    <property type="entry name" value="P-loop containing nucleoside triphosphate hydrolases"/>
    <property type="match status" value="1"/>
</dbReference>
<dbReference type="PROSITE" id="PS51332">
    <property type="entry name" value="B12_BINDING"/>
    <property type="match status" value="1"/>
</dbReference>
<keyword id="KW-0143">Chaperone</keyword>
<keyword id="KW-0846">Cobalamin</keyword>
<keyword id="KW-0170">Cobalt</keyword>
<keyword id="KW-0342">GTP-binding</keyword>
<keyword id="KW-0378">Hydrolase</keyword>
<keyword id="KW-0413">Isomerase</keyword>
<keyword id="KW-0460">Magnesium</keyword>
<keyword id="KW-0479">Metal-binding</keyword>
<keyword id="KW-0511">Multifunctional enzyme</keyword>
<keyword id="KW-0547">Nucleotide-binding</keyword>
<keyword id="KW-1185">Reference proteome</keyword>
<sequence length="1071" mass="118069">MADSTLHQPAYPVRFVTSAALFDGHDAAINIMRRILQSQGAEVIHLGHNRAVHEVVAAAVEEDVQGVAVSSYQGGHVEYFEYLASALRDAGAGHVRVFGGGGGVIVPEEIERLARSGVRIFSPEDGQRLGLPGMINELIQTCDVDLTGERPAVEAVLAGERTALARVITCLQQDALPAADRDALLAAARDRTVPVLGITGTGGSGKSSLTDELVRRLRTDQQDKLRVAILAVDPTRRRGGGALLGDRIRMNSLDGTHVFFRSLATRGGHELPHDIDAVIAACKAAGYDLVILETPGIGQGDAAIVDHVDVAMYVMTPEFGAASQLEKIDMLDFADVVAINKFERRGGADAVRDVSRQLLRNREAFGADPADMPVFGTSAATFNDDGVTALYQHLLELLGARGLPVDEGVLPRVQTRVSTRFAQIIPTARVRYLAEIADTVRTYHARTRDQVAAAQRVQRLELVAAELPGDAAVADLLARARAELDPENAALLARWPEVAESYRGPEQVVRVRDREIRTTLRRESLSGSSIPRVALPRFTDHGELLRFLRSENLPGHFPFTAGVFPFKRDNEDPARMFAGEGDPFRTNRRFKVLSEHSEAKRLSTAFDSVTLYGRDPDERPDIYGKVGTSGVSIATVDDMKALYDGFDLTAPTTSVSMTINGPAPTILAFFLNTAIDQALDRFRAAEGREPTADEAADLRARTLATVRGTVQADILKEDQGQNTCIFSTEFSLRMMADIQEWFVRNKVRNFYSVSISGYHIAEAGANPISQLAFTLANGFTYVEAYLARGMHIDDFAPNLSFFFSNGMDPEYSVIGRVARRIWAIALRDKYGAAERSQKLKYHVQTSGRSLHAQEMNFNDIRTTLQALIAIYDNCNSLHTNAYDEAVTTPTEDSVRRALAIQLIINREWGLAMNENPLQGSFIIDELTDLAEEAVLTEFERISERGGVLGAMETGYQRGKIQDESMLYEHRKHDGSLPIIGVNTFRNPHGEPERTLELARATEREKQSQLDRVREFQRRHRTQAQAALARLEEVARTDENIFEVLMDAARVCSLQQVTETFFTVGGQYRRNV</sequence>
<protein>
    <recommendedName>
        <fullName evidence="3 5">Fused isobutyryl-CoA mutase</fullName>
    </recommendedName>
    <domain>
        <recommendedName>
            <fullName evidence="3 5">Isobutyryl-CoA mutase</fullName>
            <shortName evidence="3 5">ICM</shortName>
            <ecNumber evidence="3 4">5.4.99.13</ecNumber>
        </recommendedName>
    </domain>
    <domain>
        <recommendedName>
            <fullName evidence="3 5">P-loop GTPase</fullName>
            <ecNumber evidence="2 3">3.6.5.-</ecNumber>
        </recommendedName>
        <alternativeName>
            <fullName evidence="3 5">G-protein chaperone</fullName>
        </alternativeName>
    </domain>
</protein>
<feature type="chain" id="PRO_0000434126" description="Fused isobutyryl-CoA mutase">
    <location>
        <begin position="1"/>
        <end position="1071"/>
    </location>
</feature>
<feature type="domain" description="B12-binding" evidence="3">
    <location>
        <begin position="12"/>
        <end position="149"/>
    </location>
</feature>
<feature type="region of interest" description="GTPase chaperone MeaI" evidence="3">
    <location>
        <begin position="153"/>
        <end position="400"/>
    </location>
</feature>
<feature type="region of interest" description="Linker" evidence="3">
    <location>
        <begin position="401"/>
        <end position="558"/>
    </location>
</feature>
<feature type="binding site" description="axial binding residue" evidence="3">
    <location>
        <position position="25"/>
    </location>
    <ligand>
        <name>adenosylcob(III)alamin</name>
        <dbReference type="ChEBI" id="CHEBI:18408"/>
    </ligand>
    <ligandPart>
        <name>Co</name>
        <dbReference type="ChEBI" id="CHEBI:27638"/>
    </ligandPart>
</feature>
<feature type="binding site" evidence="3">
    <location>
        <begin position="203"/>
        <end position="208"/>
    </location>
    <ligand>
        <name>GTP</name>
        <dbReference type="ChEBI" id="CHEBI:37565"/>
    </ligand>
</feature>
<feature type="binding site" evidence="3">
    <location>
        <position position="207"/>
    </location>
    <ligand>
        <name>Mg(2+)</name>
        <dbReference type="ChEBI" id="CHEBI:18420"/>
        <label>1</label>
        <note>catalytic</note>
    </ligand>
</feature>
<feature type="binding site" evidence="3">
    <location>
        <position position="232"/>
    </location>
    <ligand>
        <name>Mg(2+)</name>
        <dbReference type="ChEBI" id="CHEBI:18420"/>
        <label>2</label>
    </ligand>
</feature>
<feature type="binding site" evidence="3">
    <location>
        <position position="233"/>
    </location>
    <ligand>
        <name>Mg(2+)</name>
        <dbReference type="ChEBI" id="CHEBI:18420"/>
        <label>2</label>
    </ligand>
</feature>
<feature type="binding site" evidence="3">
    <location>
        <position position="246"/>
    </location>
    <ligand>
        <name>Mg(2+)</name>
        <dbReference type="ChEBI" id="CHEBI:18420"/>
        <label>1</label>
        <note>catalytic</note>
    </ligand>
</feature>
<feature type="binding site" evidence="3">
    <location>
        <position position="246"/>
    </location>
    <ligand>
        <name>Mg(2+)</name>
        <dbReference type="ChEBI" id="CHEBI:18420"/>
        <label>2</label>
    </ligand>
</feature>
<feature type="binding site" evidence="3">
    <location>
        <position position="249"/>
    </location>
    <ligand>
        <name>GTP</name>
        <dbReference type="ChEBI" id="CHEBI:37565"/>
    </ligand>
</feature>
<feature type="binding site" evidence="3">
    <location>
        <position position="293"/>
    </location>
    <ligand>
        <name>Mg(2+)</name>
        <dbReference type="ChEBI" id="CHEBI:18420"/>
        <label>1</label>
        <note>catalytic</note>
    </ligand>
</feature>
<feature type="binding site" evidence="3">
    <location>
        <position position="293"/>
    </location>
    <ligand>
        <name>Mg(2+)</name>
        <dbReference type="ChEBI" id="CHEBI:18420"/>
        <label>2</label>
    </ligand>
</feature>
<feature type="binding site" evidence="3">
    <location>
        <position position="294"/>
    </location>
    <ligand>
        <name>Mg(2+)</name>
        <dbReference type="ChEBI" id="CHEBI:18420"/>
        <label>2</label>
    </ligand>
</feature>
<feature type="binding site" evidence="3">
    <location>
        <begin position="340"/>
        <end position="343"/>
    </location>
    <ligand>
        <name>GTP</name>
        <dbReference type="ChEBI" id="CHEBI:37565"/>
    </ligand>
</feature>
<feature type="binding site" evidence="3">
    <location>
        <position position="566"/>
    </location>
    <ligand>
        <name>substrate</name>
    </ligand>
</feature>
<feature type="binding site" evidence="3">
    <location>
        <position position="601"/>
    </location>
    <ligand>
        <name>substrate</name>
    </ligand>
</feature>
<feature type="binding site" evidence="3">
    <location>
        <position position="707"/>
    </location>
    <ligand>
        <name>substrate</name>
    </ligand>
</feature>
<feature type="binding site" evidence="3">
    <location>
        <position position="751"/>
    </location>
    <ligand>
        <name>substrate</name>
    </ligand>
</feature>
<feature type="binding site" evidence="3">
    <location>
        <position position="800"/>
    </location>
    <ligand>
        <name>substrate</name>
    </ligand>
</feature>
<feature type="binding site" evidence="3">
    <location>
        <position position="835"/>
    </location>
    <ligand>
        <name>substrate</name>
    </ligand>
</feature>
<feature type="binding site" evidence="3">
    <location>
        <position position="840"/>
    </location>
    <ligand>
        <name>substrate</name>
    </ligand>
</feature>
<feature type="binding site" evidence="3">
    <location>
        <position position="952"/>
    </location>
    <ligand>
        <name>GTP</name>
        <dbReference type="ChEBI" id="CHEBI:37565"/>
    </ligand>
</feature>
<feature type="binding site" evidence="3">
    <location>
        <position position="1070"/>
    </location>
    <ligand>
        <name>GTP</name>
        <dbReference type="ChEBI" id="CHEBI:37565"/>
    </ligand>
</feature>
<evidence type="ECO:0000250" key="1">
    <source>
        <dbReference type="UniProtKB" id="Q1LRY0"/>
    </source>
</evidence>
<evidence type="ECO:0000250" key="2">
    <source>
        <dbReference type="UniProtKB" id="Q5KUG0"/>
    </source>
</evidence>
<evidence type="ECO:0000255" key="3">
    <source>
        <dbReference type="HAMAP-Rule" id="MF_02050"/>
    </source>
</evidence>
<evidence type="ECO:0000269" key="4">
    <source>
    </source>
</evidence>
<evidence type="ECO:0000303" key="5">
    <source>
    </source>
</evidence>
<evidence type="ECO:0000305" key="6"/>
<evidence type="ECO:0000312" key="7">
    <source>
        <dbReference type="EMBL" id="BAD55881.1"/>
    </source>
</evidence>
<reference key="1">
    <citation type="journal article" date="2004" name="Proc. Natl. Acad. Sci. U.S.A.">
        <title>The complete genomic sequence of Nocardia farcinica IFM 10152.</title>
        <authorList>
            <person name="Ishikawa J."/>
            <person name="Yamashita A."/>
            <person name="Mikami Y."/>
            <person name="Hoshino Y."/>
            <person name="Kurita H."/>
            <person name="Hotta K."/>
            <person name="Shiba T."/>
            <person name="Hattori M."/>
        </authorList>
    </citation>
    <scope>NUCLEOTIDE SEQUENCE [LARGE SCALE GENOMIC DNA]</scope>
    <source>
        <strain>IFM 10152</strain>
    </source>
</reference>
<reference key="2">
    <citation type="journal article" date="2010" name="J. Biol. Chem.">
        <title>IcmF is a fusion between the radical B12 enzyme isobutyryl-CoA mutase and its G-protein chaperone.</title>
        <authorList>
            <person name="Cracan V."/>
            <person name="Padovani D."/>
            <person name="Banerjee R."/>
        </authorList>
    </citation>
    <scope>FUNCTION</scope>
    <scope>CATALYTIC ACTIVITY</scope>
    <scope>DOMAIN</scope>
</reference>